<dbReference type="EMBL" id="BC121701">
    <property type="protein sequence ID" value="AAI21702.1"/>
    <property type="molecule type" value="mRNA"/>
</dbReference>
<dbReference type="EMBL" id="BC160578">
    <property type="protein sequence ID" value="AAI60578.1"/>
    <property type="molecule type" value="mRNA"/>
</dbReference>
<dbReference type="RefSeq" id="NP_001072445.1">
    <property type="nucleotide sequence ID" value="NM_001078977.1"/>
</dbReference>
<dbReference type="SMR" id="Q0V989"/>
<dbReference type="FunCoup" id="Q0V989">
    <property type="interactions" value="823"/>
</dbReference>
<dbReference type="STRING" id="8364.ENSXETP00000049641"/>
<dbReference type="PaxDb" id="8364-ENSXETP00000054276"/>
<dbReference type="DNASU" id="779899"/>
<dbReference type="GeneID" id="779899"/>
<dbReference type="KEGG" id="xtr:779899"/>
<dbReference type="AGR" id="Xenbase:XB-GENE-5853436"/>
<dbReference type="CTD" id="317762"/>
<dbReference type="Xenbase" id="XB-GENE-5853436">
    <property type="gene designation" value="ccdc85c"/>
</dbReference>
<dbReference type="eggNOG" id="KOG3819">
    <property type="taxonomic scope" value="Eukaryota"/>
</dbReference>
<dbReference type="HOGENOM" id="CLU_028762_0_0_1"/>
<dbReference type="InParanoid" id="Q0V989"/>
<dbReference type="OMA" id="TDNEKMN"/>
<dbReference type="OrthoDB" id="10056395at2759"/>
<dbReference type="PhylomeDB" id="Q0V989"/>
<dbReference type="TreeFam" id="TF320243"/>
<dbReference type="Proteomes" id="UP000008143">
    <property type="component" value="Chromosome 8"/>
</dbReference>
<dbReference type="Bgee" id="ENSXETG00000025464">
    <property type="expression patterns" value="Expressed in testis and 37 other cell types or tissues"/>
</dbReference>
<dbReference type="GO" id="GO:0005912">
    <property type="term" value="C:adherens junction"/>
    <property type="evidence" value="ECO:0007669"/>
    <property type="project" value="UniProtKB-SubCell"/>
</dbReference>
<dbReference type="GO" id="GO:0005923">
    <property type="term" value="C:bicellular tight junction"/>
    <property type="evidence" value="ECO:0007669"/>
    <property type="project" value="UniProtKB-SubCell"/>
</dbReference>
<dbReference type="InterPro" id="IPR019359">
    <property type="entry name" value="CCDC85"/>
</dbReference>
<dbReference type="PANTHER" id="PTHR13546:SF14">
    <property type="entry name" value="COILED-COIL DOMAIN-CONTAINING PROTEIN 85C"/>
    <property type="match status" value="1"/>
</dbReference>
<dbReference type="PANTHER" id="PTHR13546">
    <property type="entry name" value="RE60986P"/>
    <property type="match status" value="1"/>
</dbReference>
<dbReference type="Pfam" id="PF10226">
    <property type="entry name" value="CCDC85"/>
    <property type="match status" value="1"/>
</dbReference>
<protein>
    <recommendedName>
        <fullName>Coiled-coil domain-containing protein 85C</fullName>
    </recommendedName>
</protein>
<feature type="chain" id="PRO_0000345414" description="Coiled-coil domain-containing protein 85C">
    <location>
        <begin position="1"/>
        <end position="391"/>
    </location>
</feature>
<feature type="region of interest" description="Disordered" evidence="4">
    <location>
        <begin position="155"/>
        <end position="238"/>
    </location>
</feature>
<feature type="region of interest" description="Disordered" evidence="4">
    <location>
        <begin position="278"/>
        <end position="303"/>
    </location>
</feature>
<feature type="coiled-coil region" evidence="3">
    <location>
        <begin position="19"/>
        <end position="86"/>
    </location>
</feature>
<feature type="coiled-coil region" evidence="3">
    <location>
        <begin position="116"/>
        <end position="146"/>
    </location>
</feature>
<feature type="compositionally biased region" description="Polar residues" evidence="4">
    <location>
        <begin position="157"/>
        <end position="175"/>
    </location>
</feature>
<feature type="compositionally biased region" description="Low complexity" evidence="4">
    <location>
        <begin position="182"/>
        <end position="194"/>
    </location>
</feature>
<feature type="compositionally biased region" description="Polar residues" evidence="4">
    <location>
        <begin position="280"/>
        <end position="303"/>
    </location>
</feature>
<proteinExistence type="evidence at transcript level"/>
<gene>
    <name type="primary">ccdc85c</name>
</gene>
<keyword id="KW-0965">Cell junction</keyword>
<keyword id="KW-0175">Coiled coil</keyword>
<keyword id="KW-0217">Developmental protein</keyword>
<keyword id="KW-1185">Reference proteome</keyword>
<keyword id="KW-0796">Tight junction</keyword>
<organism>
    <name type="scientific">Xenopus tropicalis</name>
    <name type="common">Western clawed frog</name>
    <name type="synonym">Silurana tropicalis</name>
    <dbReference type="NCBI Taxonomy" id="8364"/>
    <lineage>
        <taxon>Eukaryota</taxon>
        <taxon>Metazoa</taxon>
        <taxon>Chordata</taxon>
        <taxon>Craniata</taxon>
        <taxon>Vertebrata</taxon>
        <taxon>Euteleostomi</taxon>
        <taxon>Amphibia</taxon>
        <taxon>Batrachia</taxon>
        <taxon>Anura</taxon>
        <taxon>Pipoidea</taxon>
        <taxon>Pipidae</taxon>
        <taxon>Xenopodinae</taxon>
        <taxon>Xenopus</taxon>
        <taxon>Silurana</taxon>
    </lineage>
</organism>
<name>CC85C_XENTR</name>
<accession>Q0V989</accession>
<comment type="function">
    <text evidence="1 2">May play a role in cell-cell adhesion and epithelium development through its interaction with proteins of the beta-catenin family (By similarity). May play an important role in cortical development, especially in the maintenance of radial glia (By similarity).</text>
</comment>
<comment type="subcellular location">
    <subcellularLocation>
        <location evidence="2">Cell junction</location>
        <location evidence="2">Tight junction</location>
    </subcellularLocation>
    <subcellularLocation>
        <location evidence="1">Cell junction</location>
        <location evidence="1">Adherens junction</location>
    </subcellularLocation>
</comment>
<comment type="similarity">
    <text evidence="5">Belongs to the CCDC85 family.</text>
</comment>
<evidence type="ECO:0000250" key="1">
    <source>
        <dbReference type="UniProtKB" id="A6NKD9"/>
    </source>
</evidence>
<evidence type="ECO:0000250" key="2">
    <source>
        <dbReference type="UniProtKB" id="E9Q6B2"/>
    </source>
</evidence>
<evidence type="ECO:0000255" key="3"/>
<evidence type="ECO:0000256" key="4">
    <source>
        <dbReference type="SAM" id="MobiDB-lite"/>
    </source>
</evidence>
<evidence type="ECO:0000305" key="5"/>
<sequence>MAKHCQGAAAEDIGTISDEELLRWSKEELAKRLRKVENEKMSLMVEHGNMMKDVNRRLQVHLHEIRGLKEVNQKLQDDNQELRELCCFLDDDRQKGKKLSREWQRFGRHSATMMWKEVGVYQQKLKELEAKQESLIRDNLELKEIILMLDEERNGAGSRSSIDSQNSLTNLNGSSGPRDVGDGSSTSSTGSAGSPDHHHHHHHHTKPTENKAGTVRKSTDDLSIPPHHRSIPNGLNDSSTTYIRQLETRVKLLEDDNKLLSQHSTSGELRTLRKGLSPYHSESQLSPLPQYQEPLQNGSTRVTPEISSTAPAGYIPVVQKPEAVVHAMKVLEVHENLDRQMSDTYEEDLSEKEKAIVREMCNVVWRKLGDATNSKPSIRQHLSGNQFKGPL</sequence>
<reference key="1">
    <citation type="submission" date="2008-03" db="EMBL/GenBank/DDBJ databases">
        <authorList>
            <consortium name="NIH - Xenopus Gene Collection (XGC) project"/>
        </authorList>
    </citation>
    <scope>NUCLEOTIDE SEQUENCE [LARGE SCALE MRNA]</scope>
    <source>
        <strain>N6</strain>
        <tissue>Lung</tissue>
        <tissue>Oviduct</tissue>
    </source>
</reference>